<protein>
    <recommendedName>
        <fullName>F-box/LRR-repeat protein 25</fullName>
    </recommendedName>
</protein>
<comment type="sequence caution" evidence="2">
    <conflict type="erroneous gene model prediction">
        <sequence resource="EMBL-CDS" id="CAB86046"/>
    </conflict>
</comment>
<gene>
    <name type="primary">FBL25</name>
    <name type="ordered locus">At5g02920</name>
    <name type="ORF">F9G14.230</name>
</gene>
<feature type="chain" id="PRO_0000272264" description="F-box/LRR-repeat protein 25">
    <location>
        <begin position="1"/>
        <end position="258"/>
    </location>
</feature>
<feature type="domain" description="F-box" evidence="1">
    <location>
        <begin position="27"/>
        <end position="76"/>
    </location>
</feature>
<feature type="repeat" description="LRR 1">
    <location>
        <begin position="101"/>
        <end position="130"/>
    </location>
</feature>
<feature type="repeat" description="LRR 2">
    <location>
        <begin position="136"/>
        <end position="161"/>
    </location>
</feature>
<feature type="repeat" description="LRR 3">
    <location>
        <begin position="177"/>
        <end position="202"/>
    </location>
</feature>
<feature type="repeat" description="LRR 4">
    <location>
        <begin position="224"/>
        <end position="249"/>
    </location>
</feature>
<sequence>MEEEDHATFAVGNPSHRFDRPLIRRSSDSISNLPDEILHHILSFIPETNLVIRTSVLSKRWRHVWSKTPHLSFEWLMVSPKLINKTLASYTASKITSFHLCTSYSYEAGHVHSSIEFAMSHNVDNLSLAFSSFPPCNKFPDFFYTSSSLKRVELRSASLTPSCIVSWTSLRDLSLTRCNLSDKSFLKILSGCPILESLSLKFCESLKYLDLSKSLRLTRLEIERRSCFREPMQSMQIVAPHIHYLRLRDSEAHCTFLV</sequence>
<dbReference type="EMBL" id="AL162973">
    <property type="protein sequence ID" value="CAB86046.1"/>
    <property type="status" value="ALT_SEQ"/>
    <property type="molecule type" value="Genomic_DNA"/>
</dbReference>
<dbReference type="EMBL" id="CP002688">
    <property type="protein sequence ID" value="AED90536.1"/>
    <property type="molecule type" value="Genomic_DNA"/>
</dbReference>
<dbReference type="EMBL" id="DQ446914">
    <property type="protein sequence ID" value="ABE66127.1"/>
    <property type="molecule type" value="mRNA"/>
</dbReference>
<dbReference type="PIR" id="T48313">
    <property type="entry name" value="T48313"/>
</dbReference>
<dbReference type="RefSeq" id="NP_568109.2">
    <property type="nucleotide sequence ID" value="NM_120370.3"/>
</dbReference>
<dbReference type="SMR" id="Q1PE04"/>
<dbReference type="BioGRID" id="16672">
    <property type="interactions" value="1"/>
</dbReference>
<dbReference type="FunCoup" id="Q1PE04">
    <property type="interactions" value="485"/>
</dbReference>
<dbReference type="PaxDb" id="3702-AT5G02920.1"/>
<dbReference type="EnsemblPlants" id="AT5G02920.1">
    <property type="protein sequence ID" value="AT5G02920.1"/>
    <property type="gene ID" value="AT5G02920"/>
</dbReference>
<dbReference type="GeneID" id="831396"/>
<dbReference type="Gramene" id="AT5G02920.1">
    <property type="protein sequence ID" value="AT5G02920.1"/>
    <property type="gene ID" value="AT5G02920"/>
</dbReference>
<dbReference type="KEGG" id="ath:AT5G02920"/>
<dbReference type="Araport" id="AT5G02920"/>
<dbReference type="TAIR" id="AT5G02920"/>
<dbReference type="eggNOG" id="ENOG502SWU0">
    <property type="taxonomic scope" value="Eukaryota"/>
</dbReference>
<dbReference type="HOGENOM" id="CLU_017148_2_0_1"/>
<dbReference type="InParanoid" id="Q1PE04"/>
<dbReference type="OMA" id="WMSVPIS"/>
<dbReference type="PhylomeDB" id="Q1PE04"/>
<dbReference type="PRO" id="PR:Q1PE04"/>
<dbReference type="Proteomes" id="UP000006548">
    <property type="component" value="Chromosome 5"/>
</dbReference>
<dbReference type="ExpressionAtlas" id="Q1PE04">
    <property type="expression patterns" value="baseline and differential"/>
</dbReference>
<dbReference type="CDD" id="cd22160">
    <property type="entry name" value="F-box_AtFBL13-like"/>
    <property type="match status" value="1"/>
</dbReference>
<dbReference type="Gene3D" id="1.20.1280.50">
    <property type="match status" value="1"/>
</dbReference>
<dbReference type="Gene3D" id="3.80.10.10">
    <property type="entry name" value="Ribonuclease Inhibitor"/>
    <property type="match status" value="1"/>
</dbReference>
<dbReference type="InterPro" id="IPR036047">
    <property type="entry name" value="F-box-like_dom_sf"/>
</dbReference>
<dbReference type="InterPro" id="IPR053781">
    <property type="entry name" value="F-box_AtFBL13-like"/>
</dbReference>
<dbReference type="InterPro" id="IPR001810">
    <property type="entry name" value="F-box_dom"/>
</dbReference>
<dbReference type="InterPro" id="IPR044997">
    <property type="entry name" value="F-box_plant"/>
</dbReference>
<dbReference type="InterPro" id="IPR032675">
    <property type="entry name" value="LRR_dom_sf"/>
</dbReference>
<dbReference type="InterPro" id="IPR055411">
    <property type="entry name" value="LRR_FXL15/At3g58940/PEG3-like"/>
</dbReference>
<dbReference type="PANTHER" id="PTHR32153">
    <property type="entry name" value="OJ000223_09.16 PROTEIN"/>
    <property type="match status" value="1"/>
</dbReference>
<dbReference type="Pfam" id="PF00646">
    <property type="entry name" value="F-box"/>
    <property type="match status" value="1"/>
</dbReference>
<dbReference type="Pfam" id="PF24758">
    <property type="entry name" value="LRR_At5g56370"/>
    <property type="match status" value="1"/>
</dbReference>
<dbReference type="SUPFAM" id="SSF81383">
    <property type="entry name" value="F-box domain"/>
    <property type="match status" value="1"/>
</dbReference>
<dbReference type="SUPFAM" id="SSF52047">
    <property type="entry name" value="RNI-like"/>
    <property type="match status" value="1"/>
</dbReference>
<dbReference type="PROSITE" id="PS50181">
    <property type="entry name" value="FBOX"/>
    <property type="match status" value="1"/>
</dbReference>
<proteinExistence type="evidence at transcript level"/>
<evidence type="ECO:0000255" key="1">
    <source>
        <dbReference type="PROSITE-ProRule" id="PRU00080"/>
    </source>
</evidence>
<evidence type="ECO:0000305" key="2"/>
<reference key="1">
    <citation type="journal article" date="2000" name="Nature">
        <title>Sequence and analysis of chromosome 5 of the plant Arabidopsis thaliana.</title>
        <authorList>
            <person name="Tabata S."/>
            <person name="Kaneko T."/>
            <person name="Nakamura Y."/>
            <person name="Kotani H."/>
            <person name="Kato T."/>
            <person name="Asamizu E."/>
            <person name="Miyajima N."/>
            <person name="Sasamoto S."/>
            <person name="Kimura T."/>
            <person name="Hosouchi T."/>
            <person name="Kawashima K."/>
            <person name="Kohara M."/>
            <person name="Matsumoto M."/>
            <person name="Matsuno A."/>
            <person name="Muraki A."/>
            <person name="Nakayama S."/>
            <person name="Nakazaki N."/>
            <person name="Naruo K."/>
            <person name="Okumura S."/>
            <person name="Shinpo S."/>
            <person name="Takeuchi C."/>
            <person name="Wada T."/>
            <person name="Watanabe A."/>
            <person name="Yamada M."/>
            <person name="Yasuda M."/>
            <person name="Sato S."/>
            <person name="de la Bastide M."/>
            <person name="Huang E."/>
            <person name="Spiegel L."/>
            <person name="Gnoj L."/>
            <person name="O'Shaughnessy A."/>
            <person name="Preston R."/>
            <person name="Habermann K."/>
            <person name="Murray J."/>
            <person name="Johnson D."/>
            <person name="Rohlfing T."/>
            <person name="Nelson J."/>
            <person name="Stoneking T."/>
            <person name="Pepin K."/>
            <person name="Spieth J."/>
            <person name="Sekhon M."/>
            <person name="Armstrong J."/>
            <person name="Becker M."/>
            <person name="Belter E."/>
            <person name="Cordum H."/>
            <person name="Cordes M."/>
            <person name="Courtney L."/>
            <person name="Courtney W."/>
            <person name="Dante M."/>
            <person name="Du H."/>
            <person name="Edwards J."/>
            <person name="Fryman J."/>
            <person name="Haakensen B."/>
            <person name="Lamar E."/>
            <person name="Latreille P."/>
            <person name="Leonard S."/>
            <person name="Meyer R."/>
            <person name="Mulvaney E."/>
            <person name="Ozersky P."/>
            <person name="Riley A."/>
            <person name="Strowmatt C."/>
            <person name="Wagner-McPherson C."/>
            <person name="Wollam A."/>
            <person name="Yoakum M."/>
            <person name="Bell M."/>
            <person name="Dedhia N."/>
            <person name="Parnell L."/>
            <person name="Shah R."/>
            <person name="Rodriguez M."/>
            <person name="Hoon See L."/>
            <person name="Vil D."/>
            <person name="Baker J."/>
            <person name="Kirchoff K."/>
            <person name="Toth K."/>
            <person name="King L."/>
            <person name="Bahret A."/>
            <person name="Miller B."/>
            <person name="Marra M.A."/>
            <person name="Martienssen R."/>
            <person name="McCombie W.R."/>
            <person name="Wilson R.K."/>
            <person name="Murphy G."/>
            <person name="Bancroft I."/>
            <person name="Volckaert G."/>
            <person name="Wambutt R."/>
            <person name="Duesterhoeft A."/>
            <person name="Stiekema W."/>
            <person name="Pohl T."/>
            <person name="Entian K.-D."/>
            <person name="Terryn N."/>
            <person name="Hartley N."/>
            <person name="Bent E."/>
            <person name="Johnson S."/>
            <person name="Langham S.-A."/>
            <person name="McCullagh B."/>
            <person name="Robben J."/>
            <person name="Grymonprez B."/>
            <person name="Zimmermann W."/>
            <person name="Ramsperger U."/>
            <person name="Wedler H."/>
            <person name="Balke K."/>
            <person name="Wedler E."/>
            <person name="Peters S."/>
            <person name="van Staveren M."/>
            <person name="Dirkse W."/>
            <person name="Mooijman P."/>
            <person name="Klein Lankhorst R."/>
            <person name="Weitzenegger T."/>
            <person name="Bothe G."/>
            <person name="Rose M."/>
            <person name="Hauf J."/>
            <person name="Berneiser S."/>
            <person name="Hempel S."/>
            <person name="Feldpausch M."/>
            <person name="Lamberth S."/>
            <person name="Villarroel R."/>
            <person name="Gielen J."/>
            <person name="Ardiles W."/>
            <person name="Bents O."/>
            <person name="Lemcke K."/>
            <person name="Kolesov G."/>
            <person name="Mayer K.F.X."/>
            <person name="Rudd S."/>
            <person name="Schoof H."/>
            <person name="Schueller C."/>
            <person name="Zaccaria P."/>
            <person name="Mewes H.-W."/>
            <person name="Bevan M."/>
            <person name="Fransz P.F."/>
        </authorList>
    </citation>
    <scope>NUCLEOTIDE SEQUENCE [LARGE SCALE GENOMIC DNA]</scope>
    <source>
        <strain>cv. Columbia</strain>
    </source>
</reference>
<reference key="2">
    <citation type="journal article" date="2017" name="Plant J.">
        <title>Araport11: a complete reannotation of the Arabidopsis thaliana reference genome.</title>
        <authorList>
            <person name="Cheng C.Y."/>
            <person name="Krishnakumar V."/>
            <person name="Chan A.P."/>
            <person name="Thibaud-Nissen F."/>
            <person name="Schobel S."/>
            <person name="Town C.D."/>
        </authorList>
    </citation>
    <scope>GENOME REANNOTATION</scope>
    <source>
        <strain>cv. Columbia</strain>
    </source>
</reference>
<reference key="3">
    <citation type="journal article" date="2006" name="Plant Biotechnol. J.">
        <title>Simultaneous high-throughput recombinational cloning of open reading frames in closed and open configurations.</title>
        <authorList>
            <person name="Underwood B.A."/>
            <person name="Vanderhaeghen R."/>
            <person name="Whitford R."/>
            <person name="Town C.D."/>
            <person name="Hilson P."/>
        </authorList>
    </citation>
    <scope>NUCLEOTIDE SEQUENCE [LARGE SCALE MRNA]</scope>
    <source>
        <strain>cv. Columbia</strain>
    </source>
</reference>
<reference key="4">
    <citation type="journal article" date="2000" name="Trends Plant Sci.">
        <title>F-box proteins in Arabidopsis.</title>
        <authorList>
            <person name="Xiao W."/>
            <person name="Jang J.-C."/>
        </authorList>
    </citation>
    <scope>GENE FAMILY</scope>
    <scope>NOMENCLATURE</scope>
</reference>
<name>FBL25_ARATH</name>
<organism>
    <name type="scientific">Arabidopsis thaliana</name>
    <name type="common">Mouse-ear cress</name>
    <dbReference type="NCBI Taxonomy" id="3702"/>
    <lineage>
        <taxon>Eukaryota</taxon>
        <taxon>Viridiplantae</taxon>
        <taxon>Streptophyta</taxon>
        <taxon>Embryophyta</taxon>
        <taxon>Tracheophyta</taxon>
        <taxon>Spermatophyta</taxon>
        <taxon>Magnoliopsida</taxon>
        <taxon>eudicotyledons</taxon>
        <taxon>Gunneridae</taxon>
        <taxon>Pentapetalae</taxon>
        <taxon>rosids</taxon>
        <taxon>malvids</taxon>
        <taxon>Brassicales</taxon>
        <taxon>Brassicaceae</taxon>
        <taxon>Camelineae</taxon>
        <taxon>Arabidopsis</taxon>
    </lineage>
</organism>
<accession>Q1PE04</accession>
<accession>Q9LYZ3</accession>
<keyword id="KW-0433">Leucine-rich repeat</keyword>
<keyword id="KW-1185">Reference proteome</keyword>
<keyword id="KW-0677">Repeat</keyword>